<reference key="1">
    <citation type="journal article" date="1998" name="Plant Cell">
        <title>Chloroplast division in higher plants requires members of two functionally divergent gene families with homology to bacterial ftsZ.</title>
        <authorList>
            <person name="Osteryoung K.W."/>
            <person name="Stokes K.D."/>
            <person name="Rutherford S.M."/>
            <person name="Percival A.L."/>
            <person name="Lee W.Y."/>
        </authorList>
    </citation>
    <scope>NUCLEOTIDE SEQUENCE [MRNA]</scope>
    <scope>FUNCTION</scope>
    <source>
        <strain>cv. Columbia</strain>
    </source>
</reference>
<reference key="2">
    <citation type="submission" date="2001-05" db="EMBL/GenBank/DDBJ databases">
        <authorList>
            <person name="Osteryoung K.W."/>
        </authorList>
    </citation>
    <scope>SEQUENCE REVISION</scope>
</reference>
<reference key="3">
    <citation type="journal article" date="2001" name="Biochem. Biophys. Res. Commun.">
        <title>Chloroplast targeting of chloroplast division FtsZ2 proteins in Arabidopsis.</title>
        <authorList>
            <person name="Fujiwara M."/>
            <person name="Yoshida S."/>
        </authorList>
    </citation>
    <scope>NUCLEOTIDE SEQUENCE [MRNA]</scope>
    <scope>SUBCELLULAR LOCATION</scope>
    <source>
        <strain>cv. Columbia</strain>
        <tissue>Shoot</tissue>
    </source>
</reference>
<reference key="4">
    <citation type="journal article" date="2001" name="Plant Physiol.">
        <title>Colocalization of plastid division proteins in the chloroplast stromal compartment establishes a new functional relationship between FtsZ1 and FtsZ2 in higher plants.</title>
        <authorList>
            <person name="McAndrew R.S."/>
            <person name="Froehlich J.E."/>
            <person name="Vitha S."/>
            <person name="Stokes K.D."/>
            <person name="Osteryoung K.W."/>
        </authorList>
    </citation>
    <scope>NUCLEOTIDE SEQUENCE [MRNA]</scope>
    <scope>SUBCELLULAR LOCATION</scope>
    <scope>FUNCTION</scope>
    <source>
        <strain>cv. Columbia</strain>
    </source>
</reference>
<reference key="5">
    <citation type="journal article" date="1999" name="Nature">
        <title>Sequence and analysis of chromosome 2 of the plant Arabidopsis thaliana.</title>
        <authorList>
            <person name="Lin X."/>
            <person name="Kaul S."/>
            <person name="Rounsley S.D."/>
            <person name="Shea T.P."/>
            <person name="Benito M.-I."/>
            <person name="Town C.D."/>
            <person name="Fujii C.Y."/>
            <person name="Mason T.M."/>
            <person name="Bowman C.L."/>
            <person name="Barnstead M.E."/>
            <person name="Feldblyum T.V."/>
            <person name="Buell C.R."/>
            <person name="Ketchum K.A."/>
            <person name="Lee J.J."/>
            <person name="Ronning C.M."/>
            <person name="Koo H.L."/>
            <person name="Moffat K.S."/>
            <person name="Cronin L.A."/>
            <person name="Shen M."/>
            <person name="Pai G."/>
            <person name="Van Aken S."/>
            <person name="Umayam L."/>
            <person name="Tallon L.J."/>
            <person name="Gill J.E."/>
            <person name="Adams M.D."/>
            <person name="Carrera A.J."/>
            <person name="Creasy T.H."/>
            <person name="Goodman H.M."/>
            <person name="Somerville C.R."/>
            <person name="Copenhaver G.P."/>
            <person name="Preuss D."/>
            <person name="Nierman W.C."/>
            <person name="White O."/>
            <person name="Eisen J.A."/>
            <person name="Salzberg S.L."/>
            <person name="Fraser C.M."/>
            <person name="Venter J.C."/>
        </authorList>
    </citation>
    <scope>NUCLEOTIDE SEQUENCE [LARGE SCALE GENOMIC DNA]</scope>
    <source>
        <strain>cv. Columbia</strain>
    </source>
</reference>
<reference key="6">
    <citation type="journal article" date="2017" name="Plant J.">
        <title>Araport11: a complete reannotation of the Arabidopsis thaliana reference genome.</title>
        <authorList>
            <person name="Cheng C.Y."/>
            <person name="Krishnakumar V."/>
            <person name="Chan A.P."/>
            <person name="Thibaud-Nissen F."/>
            <person name="Schobel S."/>
            <person name="Town C.D."/>
        </authorList>
    </citation>
    <scope>GENOME REANNOTATION</scope>
    <source>
        <strain>cv. Columbia</strain>
    </source>
</reference>
<reference key="7">
    <citation type="journal article" date="2003" name="Science">
        <title>Empirical analysis of transcriptional activity in the Arabidopsis genome.</title>
        <authorList>
            <person name="Yamada K."/>
            <person name="Lim J."/>
            <person name="Dale J.M."/>
            <person name="Chen H."/>
            <person name="Shinn P."/>
            <person name="Palm C.J."/>
            <person name="Southwick A.M."/>
            <person name="Wu H.C."/>
            <person name="Kim C.J."/>
            <person name="Nguyen M."/>
            <person name="Pham P.K."/>
            <person name="Cheuk R.F."/>
            <person name="Karlin-Newmann G."/>
            <person name="Liu S.X."/>
            <person name="Lam B."/>
            <person name="Sakano H."/>
            <person name="Wu T."/>
            <person name="Yu G."/>
            <person name="Miranda M."/>
            <person name="Quach H.L."/>
            <person name="Tripp M."/>
            <person name="Chang C.H."/>
            <person name="Lee J.M."/>
            <person name="Toriumi M.J."/>
            <person name="Chan M.M."/>
            <person name="Tang C.C."/>
            <person name="Onodera C.S."/>
            <person name="Deng J.M."/>
            <person name="Akiyama K."/>
            <person name="Ansari Y."/>
            <person name="Arakawa T."/>
            <person name="Banh J."/>
            <person name="Banno F."/>
            <person name="Bowser L."/>
            <person name="Brooks S.Y."/>
            <person name="Carninci P."/>
            <person name="Chao Q."/>
            <person name="Choy N."/>
            <person name="Enju A."/>
            <person name="Goldsmith A.D."/>
            <person name="Gurjal M."/>
            <person name="Hansen N.F."/>
            <person name="Hayashizaki Y."/>
            <person name="Johnson-Hopson C."/>
            <person name="Hsuan V.W."/>
            <person name="Iida K."/>
            <person name="Karnes M."/>
            <person name="Khan S."/>
            <person name="Koesema E."/>
            <person name="Ishida J."/>
            <person name="Jiang P.X."/>
            <person name="Jones T."/>
            <person name="Kawai J."/>
            <person name="Kamiya A."/>
            <person name="Meyers C."/>
            <person name="Nakajima M."/>
            <person name="Narusaka M."/>
            <person name="Seki M."/>
            <person name="Sakurai T."/>
            <person name="Satou M."/>
            <person name="Tamse R."/>
            <person name="Vaysberg M."/>
            <person name="Wallender E.K."/>
            <person name="Wong C."/>
            <person name="Yamamura Y."/>
            <person name="Yuan S."/>
            <person name="Shinozaki K."/>
            <person name="Davis R.W."/>
            <person name="Theologis A."/>
            <person name="Ecker J.R."/>
        </authorList>
    </citation>
    <scope>NUCLEOTIDE SEQUENCE [LARGE SCALE MRNA]</scope>
    <source>
        <strain>cv. Columbia</strain>
    </source>
</reference>
<reference key="8">
    <citation type="journal article" date="2000" name="Plant Physiol.">
        <title>Chloroplast division and morphology are differentially affected by overexpression of FtsZ1 and FtsZ2 genes in Arabidopsis.</title>
        <authorList>
            <person name="Stokes K.D."/>
            <person name="McAndrew R.S."/>
            <person name="Figueroa R."/>
            <person name="Vitha S."/>
            <person name="Osteryoung K.W."/>
        </authorList>
    </citation>
    <scope>FUNCTION</scope>
</reference>
<reference key="9">
    <citation type="journal article" date="2001" name="J. Cell Biol.">
        <title>FtsZ ring formation at the chloroplast division site in plants.</title>
        <authorList>
            <person name="Vitha S."/>
            <person name="McAndrew R.S."/>
            <person name="Osteryoung K.W."/>
        </authorList>
    </citation>
    <scope>SUBCELLULAR LOCATION</scope>
    <source>
        <strain>cv. Columbia</strain>
    </source>
</reference>
<reference key="10">
    <citation type="journal article" date="2005" name="Plant J.">
        <title>Plastid division is mediated by combinatorial assembly of plastid division proteins.</title>
        <authorList>
            <person name="Maple J."/>
            <person name="Aldridge C."/>
            <person name="Moeller S.G."/>
        </authorList>
    </citation>
    <scope>INTERACTION WITH ARC6 AND FTSZ1</scope>
    <scope>SELF-INTERACTION</scope>
    <scope>MUTAGENESIS OF PHE-466</scope>
</reference>
<reference key="11">
    <citation type="journal article" date="2007" name="Plant Cell Physiol.">
        <title>Effects of mutations in Arabidopsis FtsZ1 on plastid division, FtsZ ring formation and positioning, and FtsZ filament morphology in vivo.</title>
        <authorList>
            <person name="Yoder D.W."/>
            <person name="Kadirjan-Kalbach D."/>
            <person name="Olson B.J.S.C."/>
            <person name="Miyagishima S.-Y."/>
            <person name="Deblasio S.L."/>
            <person name="Hangarter R.P."/>
            <person name="Osteryoung K.W."/>
        </authorList>
    </citation>
    <scope>SUBCELLULAR LOCATION</scope>
    <source>
        <strain>cv. Columbia</strain>
    </source>
</reference>
<reference key="12">
    <citation type="journal article" date="2008" name="Biochem. J.">
        <title>In vivo quantitative relationship between plastid division proteins FtsZ1 and FtsZ2 and identification of ARC6 and ARC3 in a native FtsZ complex.</title>
        <authorList>
            <person name="McAndrew R.S."/>
            <person name="Olson B.J."/>
            <person name="Kadirjan-Kalbach D.K."/>
            <person name="Chi-Ham C.L."/>
            <person name="Vitha S."/>
            <person name="Froehlich J.E."/>
            <person name="Osteryoung K.W."/>
        </authorList>
    </citation>
    <scope>FUNCTION</scope>
    <scope>DISRUPTION PHENOTYPE</scope>
    <scope>SUBUNIT</scope>
    <scope>SUBCELLULAR LOCATION</scope>
    <source>
        <strain>cv. Columbia</strain>
    </source>
</reference>
<reference key="13">
    <citation type="journal article" date="2008" name="PLoS ONE">
        <title>Sorting signals, N-terminal modifications and abundance of the chloroplast proteome.</title>
        <authorList>
            <person name="Zybailov B."/>
            <person name="Rutschow H."/>
            <person name="Friso G."/>
            <person name="Rudella A."/>
            <person name="Emanuelsson O."/>
            <person name="Sun Q."/>
            <person name="van Wijk K.J."/>
        </authorList>
    </citation>
    <scope>IDENTIFICATION BY MASS SPECTROMETRY</scope>
    <scope>SUBCELLULAR LOCATION [LARGE SCALE ANALYSIS]</scope>
</reference>
<reference key="14">
    <citation type="journal article" date="2009" name="Mol. Plant">
        <title>Arabidopsis FtsZ2-1 and FtsZ2-2 are functionally redundant, but FtsZ-based plastid division is not essential for chloroplast partitioning or plant growth and development.</title>
        <authorList>
            <person name="Schmitz A.J."/>
            <person name="Glynn J.M."/>
            <person name="Olson B.J.S.C."/>
            <person name="Stokes K.D."/>
            <person name="Osteryoung K.W."/>
        </authorList>
    </citation>
    <scope>FUNCTION</scope>
    <scope>DISRUPTION PHENOTYPE</scope>
    <scope>INTERACTION WITH ARC6</scope>
</reference>
<reference key="15">
    <citation type="journal article" date="2010" name="FEBS Lett.">
        <title>Plant FtsZ1 and FtsZ2 expressed in a eukaryotic host: GTPase activity and self-assembly.</title>
        <authorList>
            <person name="Smith A.G."/>
            <person name="Johnson C.B."/>
            <person name="Vitha S."/>
            <person name="Holzenburg A."/>
        </authorList>
    </citation>
    <scope>FUNCTION AS GTPASE</scope>
    <scope>SUBUNIT</scope>
</reference>
<reference key="16">
    <citation type="journal article" date="2010" name="J. Biol. Chem.">
        <title>GTP-dependent heteropolymer formation and bundling of chloroplast FtsZ1 and FtsZ2.</title>
        <authorList>
            <person name="Olson B.J.S.C."/>
            <person name="Wang Q."/>
            <person name="Osteryoung K.W."/>
        </authorList>
    </citation>
    <scope>FUNCTION AS GTPASE</scope>
    <scope>SUBUNIT</scope>
    <scope>MUTAGENESIS OF ASP-322</scope>
</reference>
<reference key="17">
    <citation type="journal article" date="2012" name="Biochem. J.">
        <title>In vivo phosphorylation of FtsZ2 in Arabidopsis thaliana.</title>
        <authorList>
            <person name="Gargano D."/>
            <person name="Maple-Groedem J."/>
            <person name="Moeller S.G."/>
        </authorList>
    </citation>
    <scope>PHOSPHORYLATION AT SER-143</scope>
    <scope>MUTAGENESIS OF SER-143 AND THR-286</scope>
    <scope>INTERACTION WITH PGK1; ARC6; FTSZ1-1; FTSZ2-1 AND FTSZ2-2</scope>
    <scope>PTM</scope>
    <scope>SUBCELLULAR LOCATION</scope>
</reference>
<reference key="18">
    <citation type="journal article" date="2012" name="Plant J.">
        <title>Gibberellin indirectly promotes chloroplast biogenesis as a means to maintain the chloroplast population of expanded cells.</title>
        <authorList>
            <person name="Jiang X."/>
            <person name="Li H."/>
            <person name="Wang T."/>
            <person name="Peng C."/>
            <person name="Wang H."/>
            <person name="Wu H."/>
            <person name="Wang X."/>
        </authorList>
    </citation>
    <scope>INDUCTION BY GIBBERELLIC ACID</scope>
</reference>
<reference key="19">
    <citation type="journal article" date="2015" name="Microsc. Microanal.">
        <title>FtsZ1/FtsZ2 turnover in chloroplasts and the role of ARC3.</title>
        <authorList>
            <person name="Johnson C.B."/>
            <person name="Shaik R."/>
            <person name="Abdallah R."/>
            <person name="Vitha S."/>
            <person name="Holzenburg A."/>
        </authorList>
    </citation>
    <scope>FUNCTION</scope>
    <scope>DISRUPTION PHENOTYPE</scope>
    <scope>SUBCELLULAR LOCATION</scope>
    <source>
        <strain>cv. Columbia</strain>
    </source>
</reference>
<reference key="20">
    <citation type="journal article" date="2016" name="Nat. Plants">
        <title>Chloroplast FtsZ assembles into a contractible ring via tubulin-like heteropolymerization.</title>
        <authorList>
            <person name="Yoshida Y."/>
            <person name="Mogi Y."/>
            <person name="TerBush A.D."/>
            <person name="Osteryoung K.W."/>
        </authorList>
    </citation>
    <scope>SUBUNIT</scope>
</reference>
<reference key="21">
    <citation type="journal article" date="2016" name="Plant Physiol.">
        <title>Roles of Arabidopsis PARC6 in Coordination of the Chloroplast Division Complex and Negative Regulation of FtsZ Assembly.</title>
        <authorList>
            <person name="Zhang M."/>
            <person name="Chen C."/>
            <person name="Froehlich J.E."/>
            <person name="TerBush A.D."/>
            <person name="Osteryoung K.W."/>
        </authorList>
    </citation>
    <scope>MUTAGENESIS OF PHE-466</scope>
    <scope>INTERACTION WITH ARC6 AND CDP1/PARC6</scope>
    <source>
        <strain>cv. Columbia</strain>
    </source>
</reference>
<reference key="22">
    <citation type="journal article" date="2018" name="Biochem. J.">
        <title>Chloroplast division protein ARC3 acts on FtsZ2 by preventing filament bundling and enhancing GTPase activity.</title>
        <authorList>
            <person name="Shaik R.S."/>
            <person name="Sung M.W."/>
            <person name="Vitha S."/>
            <person name="Holzenburg A."/>
        </authorList>
    </citation>
    <scope>PTM</scope>
    <scope>SUBUNIT</scope>
    <scope>INTERACTION WITH ARC3 AND ARC6</scope>
    <scope>ACTIVITY REGULATION</scope>
</reference>
<reference key="23">
    <citation type="journal article" date="2018" name="Dev. Biol.">
        <title>Differential impacts of FtsZ proteins on plastid division in the shoot apex of Arabidopsis.</title>
        <authorList>
            <person name="Swid N."/>
            <person name="Nevo R."/>
            <person name="Kiss V."/>
            <person name="Kapon R."/>
            <person name="Dagan S."/>
            <person name="Snir O."/>
            <person name="Adam Z."/>
            <person name="Falconet D."/>
            <person name="Reich Z."/>
            <person name="Charuvi D."/>
        </authorList>
    </citation>
    <scope>FUNCTION</scope>
    <scope>DISRUPTION PHENOTYPE</scope>
    <source>
        <strain>cv. Columbia</strain>
        <strain>cv. Wassilewskija</strain>
    </source>
</reference>
<reference key="24">
    <citation type="journal article" date="2018" name="J. Biol. Chem.">
        <title>The chloroplast division protein ARC6 acts to inhibit disassembly of GDP-bound FtsZ2.</title>
        <authorList>
            <person name="Sung M.W."/>
            <person name="Shaik R."/>
            <person name="TerBush A.D."/>
            <person name="Osteryoung K.W."/>
            <person name="Vitha S."/>
            <person name="Holzenburg A."/>
        </authorList>
    </citation>
    <scope>FUNCTION</scope>
    <scope>MUTAGENESIS OF ASP-322</scope>
    <scope>SUBUNIT</scope>
    <scope>INTERACTION WITH ARC6</scope>
    <scope>SUBCELLULAR LOCATION</scope>
</reference>
<reference key="25">
    <citation type="journal article" date="2018" name="Physiol. Plantarum">
        <title>Isolation and analysis of a stromule-overproducing Arabidopsis mutant suggest the role of PARC6 in plastid morphology maintenance in the leaf epidermis.</title>
        <authorList>
            <person name="Itoh R.D."/>
            <person name="Ishikawa H."/>
            <person name="Nakajima K.P."/>
            <person name="Moriyama S."/>
            <person name="Fujiwara M.T."/>
        </authorList>
    </citation>
    <scope>INTERACTION WITH CDP1/PARC6</scope>
    <source>
        <strain>cv. Columbia</strain>
    </source>
</reference>
<reference key="26">
    <citation type="journal article" date="2018" name="Plant Cell">
        <title>MCD1 associates with FtsZ filaments via the membrane-tethering protein ARC6 to guide chloroplast division.</title>
        <authorList>
            <person name="Chen L."/>
            <person name="Sun B."/>
            <person name="Gao W."/>
            <person name="Zhang Q.Y."/>
            <person name="Yuan H."/>
            <person name="Zhang M."/>
        </authorList>
    </citation>
    <scope>INTERACTION WITH MCD1 AND ARC6</scope>
    <source>
        <strain>cv. Columbia</strain>
    </source>
</reference>
<reference key="27">
    <citation type="journal article" date="2019" name="Plant Cell">
        <title>ARC3 activation by PARC6 promotes FtsZ-ring remodeling at the chloroplast division site.</title>
        <authorList>
            <person name="Chen C."/>
            <person name="Cao L."/>
            <person name="Yang Y."/>
            <person name="Porter K.J."/>
            <person name="Osteryoung K.W."/>
        </authorList>
    </citation>
    <scope>SUBUNIT</scope>
    <scope>INTERACTION WITH ARC3</scope>
    <source>
        <strain>cv. Columbia</strain>
    </source>
</reference>
<sequence>MATYVSPCFTPSDSRLLTVLRKNVLPENHLGRLNSIRTIDSKKNRVVVAAQKSESSPIRNSPRHYQSQAQDPFLNLHPEISMLRGEGTSTIVNPRKETSSGPVVEDFEEPSAPSNYNEARIKVIGVGGGGSNAVNRMIESEMSGVEFWIVNTDIQAMRMSPVLPDNRLQIGKELTRGLGAGGNPEIGMNAARESKEVIEEALYGSDMVFVTAGMGGGTGTGAAPVIAGIAKAMGILTVGIATTPFSFEGRRRTVQAQEGLASLRDNVDTLIVIPNDKLLTAVSQSTPVTEAFNLADDILRQGVRGISDIITIPGLVNVDFADVRAIMANAGSSLMGIGTATGKSRARDAALNAIQSPLLDIGIERATGIVWNITGGSDLTLFEVNAAAEVIYDLVDPTANLIFGAVVDPALSGQVSITLIATGFKRQEEGEGRTVQMVQADAASVGATRRPSSSFRESGSVEIPEFLKKKGSSRYPRV</sequence>
<keyword id="KW-0150">Chloroplast</keyword>
<keyword id="KW-0342">GTP-binding</keyword>
<keyword id="KW-0472">Membrane</keyword>
<keyword id="KW-0547">Nucleotide-binding</keyword>
<keyword id="KW-0597">Phosphoprotein</keyword>
<keyword id="KW-0934">Plastid</keyword>
<keyword id="KW-1185">Reference proteome</keyword>
<keyword id="KW-0793">Thylakoid</keyword>
<keyword id="KW-0809">Transit peptide</keyword>
<accession>O82533</accession>
<accession>Q93VK3</accession>
<comment type="function">
    <text evidence="5 6 8 10 11 12 15 20 21 24">Exhibits GTPase activity which converts GTP ligands to GDP (PubMed:29769312). Component of the plastid division machinery consisting in a binary fission accomplished by the simultaneous constriction of the FtsZ ring on the stromal side of the inner envelope membrane, and the ARC5 ring on the cytosolic side of the outer envelope membrane (PubMed:25731613). Required for plastid division in a dose-dependent manner. In the vegetative shoot apex, at the shoot apical meristem (SAM), where the proplastid-to-chloroplast transition takes place, major contributor of plastid division in the L1 and L3 layers and contributes equally with FTSZ1 in the L2 layer (PubMed:29920253).</text>
</comment>
<comment type="activity regulation">
    <text evidence="19">GTPase activity is enhanced by ARC3.</text>
</comment>
<comment type="subunit">
    <text evidence="7 8 10 11 12 13 16 17 18 19 20 22 23">Aggregates to form a contractile ring-like structure; contraction of the ring was accompanied by an increase in the filament turnover rate (PubMed:27322658, PubMed:29769312). Self-interacts and binds to FTSZ1 in heteromers to form two morphologically distinct types of filaments, termed type-I (smooth filaments) and -II (rough filaments), in a GTP-dependent manner; the GDP-induced disassembly is inhibited by ARC6 (PubMed:27322658, PubMed:29769312). Interacts (via C-terminus) with ARC6; this interaction enables ARC3 binding to FTSZ2 (PubMed:29138260, PubMed:29769312, PubMed:29967285). Part of a complex made of ARC3, ARC6, FTSZ1 and FTSZ2 (PubMed:22823492). Binds to MCD1 in an ARC6-dependent manner (PubMed:29967285). Binds to CDP1/PARC6 (PubMed:26527658, PubMed:28984364). Part of a complex made of CDP1/PARC6, ARC3 and FtsZ proteins in the middle of the plastid; this complex enhances the dynamics of Z rings during chloroplast division (PubMed:30824505). Binds to PGK1 (PubMed:22823492).</text>
</comment>
<comment type="subcellular location">
    <subcellularLocation>
        <location evidence="9 13 20">Plastid</location>
        <location evidence="9 13 20">Chloroplast stroma</location>
    </subcellularLocation>
    <subcellularLocation>
        <location evidence="9">Plastid</location>
        <location evidence="9">Chloroplast thylakoid membrane</location>
        <topology>Peripheral membrane protein</topology>
    </subcellularLocation>
    <text evidence="9 13 15 20">Forms a contractile ring at the chloroplast midpoint that coaligns with FTSZ1 rings (PubMed:18431481, PubMed:22823492, PubMed:25731613, PubMed:29769312). Exhibits a dynamic trunover in FtsZ ring facilitated by ARC3-mediated destabilization (PubMed:25731613).</text>
</comment>
<comment type="induction">
    <text evidence="14">Slightly induced by gibberellic acid (GA).</text>
</comment>
<comment type="PTM">
    <text evidence="19 20">Filaments containing FTSZ2-1 are stabilized when in complex with GTP but destabilized after conversion of GTP into GDP; ARC6 conteracts this destabilisation by preventing the dissociation of GDP-bound FTSZ2 molecules thus inhibiting filament disassembly whereas ARC3 promotes GTPase activity thus accelerating the conversion of GTP into GDP and triggering FtsZ2 filaments disassembly.</text>
</comment>
<comment type="PTM">
    <text evidence="13">Phosphorylation at Ser-143 is necessary for interactions with ARC3, ARC6, FTSZ1 and FTSZ2-2. Phosphorylations at Ser-143 and Thr-286 are required for the formation of contractile ring at the chloroplast midpoint.</text>
</comment>
<comment type="disruption phenotype">
    <text evidence="8 11 15 21">Reduced number of heterogeneous large chloroplast population (small and large plastids) due to impaired plastid division (PubMed:25731613). Increased plastid volume in young leaf primordia and in the shoot apical meristem (SAM), including the central zone as well as peripheral zone of L1, the outermost layer, the peripheral zone of L2, and the peripheral zone of L3 (PubMed:29920253).</text>
</comment>
<comment type="similarity">
    <text evidence="26">Belongs to the FtsZ family.</text>
</comment>
<organism>
    <name type="scientific">Arabidopsis thaliana</name>
    <name type="common">Mouse-ear cress</name>
    <dbReference type="NCBI Taxonomy" id="3702"/>
    <lineage>
        <taxon>Eukaryota</taxon>
        <taxon>Viridiplantae</taxon>
        <taxon>Streptophyta</taxon>
        <taxon>Embryophyta</taxon>
        <taxon>Tracheophyta</taxon>
        <taxon>Spermatophyta</taxon>
        <taxon>Magnoliopsida</taxon>
        <taxon>eudicotyledons</taxon>
        <taxon>Gunneridae</taxon>
        <taxon>Pentapetalae</taxon>
        <taxon>rosids</taxon>
        <taxon>malvids</taxon>
        <taxon>Brassicales</taxon>
        <taxon>Brassicaceae</taxon>
        <taxon>Camelineae</taxon>
        <taxon>Arabidopsis</taxon>
    </lineage>
</organism>
<feature type="transit peptide" description="Chloroplast" evidence="3">
    <location>
        <begin position="1"/>
        <end status="unknown"/>
    </location>
</feature>
<feature type="chain" id="PRO_0000406890" description="Cell division protein FtsZ homolog 2-1, chloroplastic">
    <location>
        <begin status="unknown"/>
        <end position="478"/>
    </location>
</feature>
<feature type="region of interest" description="Disordered" evidence="4">
    <location>
        <begin position="86"/>
        <end position="112"/>
    </location>
</feature>
<feature type="binding site" evidence="1">
    <location>
        <begin position="128"/>
        <end position="132"/>
    </location>
    <ligand>
        <name>GTP</name>
        <dbReference type="ChEBI" id="CHEBI:37565"/>
    </ligand>
</feature>
<feature type="binding site" evidence="1">
    <location>
        <begin position="217"/>
        <end position="219"/>
    </location>
    <ligand>
        <name>GTP</name>
        <dbReference type="ChEBI" id="CHEBI:37565"/>
    </ligand>
</feature>
<feature type="binding site" evidence="1">
    <location>
        <position position="248"/>
    </location>
    <ligand>
        <name>GTP</name>
        <dbReference type="ChEBI" id="CHEBI:37565"/>
    </ligand>
</feature>
<feature type="binding site" evidence="1">
    <location>
        <position position="252"/>
    </location>
    <ligand>
        <name>GTP</name>
        <dbReference type="ChEBI" id="CHEBI:37565"/>
    </ligand>
</feature>
<feature type="binding site" evidence="1">
    <location>
        <position position="296"/>
    </location>
    <ligand>
        <name>GTP</name>
        <dbReference type="ChEBI" id="CHEBI:37565"/>
    </ligand>
</feature>
<feature type="modified residue" description="Phosphoserine; by PGK1" evidence="13">
    <location>
        <position position="143"/>
    </location>
</feature>
<feature type="modified residue" description="Phosphothreonine; by PGK1" evidence="2">
    <location>
        <position position="286"/>
    </location>
</feature>
<feature type="mutagenesis site" description="Reduced interaction with FTSZ1-1 and FTSZ2-2 and inpaired interaction with FTSZ2-1 and ARC6. Lost ability to form contractile ring at the chloroplast midpoint." evidence="13">
    <original>S</original>
    <variation>A</variation>
    <location>
        <position position="143"/>
    </location>
</feature>
<feature type="mutagenesis site" description="Normal interaction with FtsZ proteins and with ARC6. Lost ability to form contractile ring at the chloroplast midpoint." evidence="13">
    <original>T</original>
    <variation>V</variation>
    <location>
        <position position="286"/>
    </location>
</feature>
<feature type="mutagenesis site" description="Impaired GTPase activity leading to the lack of GDP binding and the formation of aster-shaped structures of more stable filaments associated with a weaker ARC6-binding." evidence="12 20">
    <original>D</original>
    <variation>A</variation>
    <location>
        <position position="322"/>
    </location>
</feature>
<feature type="mutagenesis site" description="Reduced ARC6 binding and abolished CDP1/PARC6 binding." evidence="7 16">
    <original>F</original>
    <variation>A</variation>
    <location>
        <position position="466"/>
    </location>
</feature>
<gene>
    <name evidence="25" type="primary">FTSZ2-1</name>
    <name evidence="27" type="ordered locus">At2g36250</name>
    <name evidence="28" type="ORF">F2H17.14</name>
</gene>
<protein>
    <recommendedName>
        <fullName evidence="25">Cell division protein FtsZ homolog 2-1, chloroplastic</fullName>
        <shortName evidence="25">AtFtsZ2-1</shortName>
    </recommendedName>
    <alternativeName>
        <fullName evidence="25">Plastid division protein FTSZ2-1</fullName>
    </alternativeName>
</protein>
<dbReference type="EMBL" id="AF089738">
    <property type="protein sequence ID" value="AAC35987.2"/>
    <property type="molecule type" value="mRNA"/>
</dbReference>
<dbReference type="EMBL" id="AB052757">
    <property type="protein sequence ID" value="BAB68127.1"/>
    <property type="molecule type" value="mRNA"/>
</dbReference>
<dbReference type="EMBL" id="AC006921">
    <property type="protein sequence ID" value="AAD21440.2"/>
    <property type="molecule type" value="Genomic_DNA"/>
</dbReference>
<dbReference type="EMBL" id="CP002685">
    <property type="protein sequence ID" value="AEC09221.1"/>
    <property type="molecule type" value="Genomic_DNA"/>
</dbReference>
<dbReference type="EMBL" id="CP002685">
    <property type="protein sequence ID" value="AEC09222.1"/>
    <property type="molecule type" value="Genomic_DNA"/>
</dbReference>
<dbReference type="EMBL" id="CP002685">
    <property type="protein sequence ID" value="ANM61304.1"/>
    <property type="molecule type" value="Genomic_DNA"/>
</dbReference>
<dbReference type="EMBL" id="AY050844">
    <property type="protein sequence ID" value="AAK92779.1"/>
    <property type="molecule type" value="mRNA"/>
</dbReference>
<dbReference type="EMBL" id="AY091183">
    <property type="protein sequence ID" value="AAM14122.1"/>
    <property type="molecule type" value="mRNA"/>
</dbReference>
<dbReference type="PIR" id="E84778">
    <property type="entry name" value="E84778"/>
</dbReference>
<dbReference type="PIR" id="JC7770">
    <property type="entry name" value="JC7770"/>
</dbReference>
<dbReference type="RefSeq" id="NP_001323530.1">
    <property type="nucleotide sequence ID" value="NM_001336588.1"/>
</dbReference>
<dbReference type="RefSeq" id="NP_565839.1">
    <property type="nucleotide sequence ID" value="NM_129183.2"/>
</dbReference>
<dbReference type="RefSeq" id="NP_973612.1">
    <property type="nucleotide sequence ID" value="NM_201883.1"/>
</dbReference>
<dbReference type="SMR" id="O82533"/>
<dbReference type="BioGRID" id="3541">
    <property type="interactions" value="9"/>
</dbReference>
<dbReference type="FunCoup" id="O82533">
    <property type="interactions" value="886"/>
</dbReference>
<dbReference type="IntAct" id="O82533">
    <property type="interactions" value="2"/>
</dbReference>
<dbReference type="STRING" id="3702.O82533"/>
<dbReference type="iPTMnet" id="O82533"/>
<dbReference type="PaxDb" id="3702-AT2G36250.2"/>
<dbReference type="ProteomicsDB" id="230003"/>
<dbReference type="EnsemblPlants" id="AT2G36250.1">
    <property type="protein sequence ID" value="AT2G36250.1"/>
    <property type="gene ID" value="AT2G36250"/>
</dbReference>
<dbReference type="EnsemblPlants" id="AT2G36250.2">
    <property type="protein sequence ID" value="AT2G36250.2"/>
    <property type="gene ID" value="AT2G36250"/>
</dbReference>
<dbReference type="EnsemblPlants" id="AT2G36250.3">
    <property type="protein sequence ID" value="AT2G36250.3"/>
    <property type="gene ID" value="AT2G36250"/>
</dbReference>
<dbReference type="GeneID" id="818197"/>
<dbReference type="Gramene" id="AT2G36250.1">
    <property type="protein sequence ID" value="AT2G36250.1"/>
    <property type="gene ID" value="AT2G36250"/>
</dbReference>
<dbReference type="Gramene" id="AT2G36250.2">
    <property type="protein sequence ID" value="AT2G36250.2"/>
    <property type="gene ID" value="AT2G36250"/>
</dbReference>
<dbReference type="Gramene" id="AT2G36250.3">
    <property type="protein sequence ID" value="AT2G36250.3"/>
    <property type="gene ID" value="AT2G36250"/>
</dbReference>
<dbReference type="KEGG" id="ath:AT2G36250"/>
<dbReference type="Araport" id="AT2G36250"/>
<dbReference type="TAIR" id="AT2G36250">
    <property type="gene designation" value="FTSZ2-1"/>
</dbReference>
<dbReference type="eggNOG" id="ENOG502QRFN">
    <property type="taxonomic scope" value="Eukaryota"/>
</dbReference>
<dbReference type="HOGENOM" id="CLU_024865_3_0_1"/>
<dbReference type="InParanoid" id="O82533"/>
<dbReference type="OrthoDB" id="70257at2759"/>
<dbReference type="PhylomeDB" id="O82533"/>
<dbReference type="PRO" id="PR:O82533"/>
<dbReference type="Proteomes" id="UP000006548">
    <property type="component" value="Chromosome 2"/>
</dbReference>
<dbReference type="ExpressionAtlas" id="O82533">
    <property type="expression patterns" value="baseline and differential"/>
</dbReference>
<dbReference type="GO" id="GO:0009507">
    <property type="term" value="C:chloroplast"/>
    <property type="evidence" value="ECO:0000314"/>
    <property type="project" value="UniProtKB"/>
</dbReference>
<dbReference type="GO" id="GO:0009570">
    <property type="term" value="C:chloroplast stroma"/>
    <property type="evidence" value="ECO:0000314"/>
    <property type="project" value="TAIR"/>
</dbReference>
<dbReference type="GO" id="GO:0009534">
    <property type="term" value="C:chloroplast thylakoid"/>
    <property type="evidence" value="ECO:0007005"/>
    <property type="project" value="TAIR"/>
</dbReference>
<dbReference type="GO" id="GO:0009535">
    <property type="term" value="C:chloroplast thylakoid membrane"/>
    <property type="evidence" value="ECO:0007669"/>
    <property type="project" value="UniProtKB-SubCell"/>
</dbReference>
<dbReference type="GO" id="GO:0070938">
    <property type="term" value="C:contractile ring"/>
    <property type="evidence" value="ECO:0000314"/>
    <property type="project" value="UniProtKB"/>
</dbReference>
<dbReference type="GO" id="GO:0005783">
    <property type="term" value="C:endoplasmic reticulum"/>
    <property type="evidence" value="ECO:0007005"/>
    <property type="project" value="TAIR"/>
</dbReference>
<dbReference type="GO" id="GO:0005525">
    <property type="term" value="F:GTP binding"/>
    <property type="evidence" value="ECO:0000314"/>
    <property type="project" value="UniProtKB"/>
</dbReference>
<dbReference type="GO" id="GO:0003924">
    <property type="term" value="F:GTPase activity"/>
    <property type="evidence" value="ECO:0000314"/>
    <property type="project" value="UniProtKB"/>
</dbReference>
<dbReference type="GO" id="GO:0042803">
    <property type="term" value="F:protein homodimerization activity"/>
    <property type="evidence" value="ECO:0000314"/>
    <property type="project" value="UniProtKB"/>
</dbReference>
<dbReference type="GO" id="GO:0010020">
    <property type="term" value="P:chloroplast fission"/>
    <property type="evidence" value="ECO:0000315"/>
    <property type="project" value="UniProtKB"/>
</dbReference>
<dbReference type="GO" id="GO:0009739">
    <property type="term" value="P:response to gibberellin"/>
    <property type="evidence" value="ECO:0000270"/>
    <property type="project" value="UniProtKB"/>
</dbReference>
<dbReference type="CDD" id="cd02201">
    <property type="entry name" value="FtsZ_type1"/>
    <property type="match status" value="1"/>
</dbReference>
<dbReference type="FunFam" id="3.40.50.1440:FF:000001">
    <property type="entry name" value="Cell division protein FtsZ"/>
    <property type="match status" value="1"/>
</dbReference>
<dbReference type="FunFam" id="3.30.1330.20:FF:000007">
    <property type="entry name" value="Cell division protein ftsZ, putative"/>
    <property type="match status" value="1"/>
</dbReference>
<dbReference type="Gene3D" id="3.30.1330.20">
    <property type="entry name" value="Tubulin/FtsZ, C-terminal domain"/>
    <property type="match status" value="1"/>
</dbReference>
<dbReference type="Gene3D" id="3.40.50.1440">
    <property type="entry name" value="Tubulin/FtsZ, GTPase domain"/>
    <property type="match status" value="1"/>
</dbReference>
<dbReference type="HAMAP" id="MF_00909">
    <property type="entry name" value="FtsZ"/>
    <property type="match status" value="1"/>
</dbReference>
<dbReference type="InterPro" id="IPR000158">
    <property type="entry name" value="Cell_div_FtsZ"/>
</dbReference>
<dbReference type="InterPro" id="IPR020805">
    <property type="entry name" value="Cell_div_FtsZ_CS"/>
</dbReference>
<dbReference type="InterPro" id="IPR045061">
    <property type="entry name" value="FtsZ/CetZ"/>
</dbReference>
<dbReference type="InterPro" id="IPR024757">
    <property type="entry name" value="FtsZ_C"/>
</dbReference>
<dbReference type="InterPro" id="IPR008280">
    <property type="entry name" value="Tub_FtsZ_C"/>
</dbReference>
<dbReference type="InterPro" id="IPR037103">
    <property type="entry name" value="Tubulin/FtsZ-like_C"/>
</dbReference>
<dbReference type="InterPro" id="IPR018316">
    <property type="entry name" value="Tubulin/FtsZ_2-layer-sand-dom"/>
</dbReference>
<dbReference type="InterPro" id="IPR036525">
    <property type="entry name" value="Tubulin/FtsZ_GTPase_sf"/>
</dbReference>
<dbReference type="InterPro" id="IPR003008">
    <property type="entry name" value="Tubulin_FtsZ_GTPase"/>
</dbReference>
<dbReference type="NCBIfam" id="TIGR00065">
    <property type="entry name" value="ftsZ"/>
    <property type="match status" value="1"/>
</dbReference>
<dbReference type="PANTHER" id="PTHR30314:SF16">
    <property type="entry name" value="CELL DIVISION PROTEIN FTSZ HOMOLOG 2-1, CHLOROPLASTIC"/>
    <property type="match status" value="1"/>
</dbReference>
<dbReference type="PANTHER" id="PTHR30314">
    <property type="entry name" value="CELL DIVISION PROTEIN FTSZ-RELATED"/>
    <property type="match status" value="1"/>
</dbReference>
<dbReference type="Pfam" id="PF12327">
    <property type="entry name" value="FtsZ_C"/>
    <property type="match status" value="1"/>
</dbReference>
<dbReference type="Pfam" id="PF00091">
    <property type="entry name" value="Tubulin"/>
    <property type="match status" value="1"/>
</dbReference>
<dbReference type="PRINTS" id="PR00423">
    <property type="entry name" value="CELLDVISFTSZ"/>
</dbReference>
<dbReference type="SMART" id="SM00864">
    <property type="entry name" value="Tubulin"/>
    <property type="match status" value="1"/>
</dbReference>
<dbReference type="SMART" id="SM00865">
    <property type="entry name" value="Tubulin_C"/>
    <property type="match status" value="1"/>
</dbReference>
<dbReference type="SUPFAM" id="SSF55307">
    <property type="entry name" value="Tubulin C-terminal domain-like"/>
    <property type="match status" value="1"/>
</dbReference>
<dbReference type="SUPFAM" id="SSF52490">
    <property type="entry name" value="Tubulin nucleotide-binding domain-like"/>
    <property type="match status" value="1"/>
</dbReference>
<dbReference type="PROSITE" id="PS01135">
    <property type="entry name" value="FTSZ_2"/>
    <property type="match status" value="1"/>
</dbReference>
<proteinExistence type="evidence at protein level"/>
<name>FTZ21_ARATH</name>
<evidence type="ECO:0000250" key="1">
    <source>
        <dbReference type="UniProtKB" id="P0A029"/>
    </source>
</evidence>
<evidence type="ECO:0000250" key="2">
    <source>
        <dbReference type="UniProtKB" id="Q9LXJ0"/>
    </source>
</evidence>
<evidence type="ECO:0000255" key="3"/>
<evidence type="ECO:0000256" key="4">
    <source>
        <dbReference type="SAM" id="MobiDB-lite"/>
    </source>
</evidence>
<evidence type="ECO:0000269" key="5">
    <source>
    </source>
</evidence>
<evidence type="ECO:0000269" key="6">
    <source>
    </source>
</evidence>
<evidence type="ECO:0000269" key="7">
    <source>
    </source>
</evidence>
<evidence type="ECO:0000269" key="8">
    <source>
    </source>
</evidence>
<evidence type="ECO:0000269" key="9">
    <source>
    </source>
</evidence>
<evidence type="ECO:0000269" key="10">
    <source>
    </source>
</evidence>
<evidence type="ECO:0000269" key="11">
    <source>
    </source>
</evidence>
<evidence type="ECO:0000269" key="12">
    <source>
    </source>
</evidence>
<evidence type="ECO:0000269" key="13">
    <source>
    </source>
</evidence>
<evidence type="ECO:0000269" key="14">
    <source>
    </source>
</evidence>
<evidence type="ECO:0000269" key="15">
    <source>
    </source>
</evidence>
<evidence type="ECO:0000269" key="16">
    <source>
    </source>
</evidence>
<evidence type="ECO:0000269" key="17">
    <source>
    </source>
</evidence>
<evidence type="ECO:0000269" key="18">
    <source>
    </source>
</evidence>
<evidence type="ECO:0000269" key="19">
    <source>
    </source>
</evidence>
<evidence type="ECO:0000269" key="20">
    <source>
    </source>
</evidence>
<evidence type="ECO:0000269" key="21">
    <source>
    </source>
</evidence>
<evidence type="ECO:0000269" key="22">
    <source>
    </source>
</evidence>
<evidence type="ECO:0000269" key="23">
    <source>
    </source>
</evidence>
<evidence type="ECO:0000269" key="24">
    <source>
    </source>
</evidence>
<evidence type="ECO:0000303" key="25">
    <source>
    </source>
</evidence>
<evidence type="ECO:0000305" key="26"/>
<evidence type="ECO:0000312" key="27">
    <source>
        <dbReference type="Araport" id="AT2G36250"/>
    </source>
</evidence>
<evidence type="ECO:0000312" key="28">
    <source>
        <dbReference type="EMBL" id="AAD21440.2"/>
    </source>
</evidence>